<dbReference type="EC" id="3.2.1.18" evidence="1"/>
<dbReference type="EMBL" id="CY006837">
    <property type="protein sequence ID" value="ABC02269.1"/>
    <property type="molecule type" value="Genomic_RNA"/>
</dbReference>
<dbReference type="SMR" id="Q2RFA3"/>
<dbReference type="CAZy" id="GH34">
    <property type="family name" value="Glycoside Hydrolase Family 34"/>
</dbReference>
<dbReference type="GlyCosmos" id="Q2RFA3">
    <property type="glycosylation" value="7 sites, No reported glycans"/>
</dbReference>
<dbReference type="PRO" id="PR:Q2RFA3"/>
<dbReference type="Proteomes" id="UP000007792">
    <property type="component" value="Genome"/>
</dbReference>
<dbReference type="GO" id="GO:0020002">
    <property type="term" value="C:host cell plasma membrane"/>
    <property type="evidence" value="ECO:0007669"/>
    <property type="project" value="UniProtKB-SubCell"/>
</dbReference>
<dbReference type="GO" id="GO:0016020">
    <property type="term" value="C:membrane"/>
    <property type="evidence" value="ECO:0007669"/>
    <property type="project" value="UniProtKB-UniRule"/>
</dbReference>
<dbReference type="GO" id="GO:0055036">
    <property type="term" value="C:virion membrane"/>
    <property type="evidence" value="ECO:0007669"/>
    <property type="project" value="UniProtKB-SubCell"/>
</dbReference>
<dbReference type="GO" id="GO:0004308">
    <property type="term" value="F:exo-alpha-sialidase activity"/>
    <property type="evidence" value="ECO:0007669"/>
    <property type="project" value="UniProtKB-UniRule"/>
</dbReference>
<dbReference type="GO" id="GO:0046872">
    <property type="term" value="F:metal ion binding"/>
    <property type="evidence" value="ECO:0007669"/>
    <property type="project" value="UniProtKB-UniRule"/>
</dbReference>
<dbReference type="GO" id="GO:0005975">
    <property type="term" value="P:carbohydrate metabolic process"/>
    <property type="evidence" value="ECO:0007669"/>
    <property type="project" value="InterPro"/>
</dbReference>
<dbReference type="GO" id="GO:0046761">
    <property type="term" value="P:viral budding from plasma membrane"/>
    <property type="evidence" value="ECO:0007669"/>
    <property type="project" value="UniProtKB-UniRule"/>
</dbReference>
<dbReference type="CDD" id="cd15483">
    <property type="entry name" value="Influenza_NA"/>
    <property type="match status" value="1"/>
</dbReference>
<dbReference type="Gene3D" id="2.120.10.10">
    <property type="match status" value="1"/>
</dbReference>
<dbReference type="HAMAP" id="MF_04071">
    <property type="entry name" value="INFV_NRAM"/>
    <property type="match status" value="1"/>
</dbReference>
<dbReference type="InterPro" id="IPR001860">
    <property type="entry name" value="Glyco_hydro_34"/>
</dbReference>
<dbReference type="InterPro" id="IPR033654">
    <property type="entry name" value="Sialidase_Influenza_A/B"/>
</dbReference>
<dbReference type="InterPro" id="IPR036278">
    <property type="entry name" value="Sialidase_sf"/>
</dbReference>
<dbReference type="Pfam" id="PF00064">
    <property type="entry name" value="Neur"/>
    <property type="match status" value="1"/>
</dbReference>
<dbReference type="SUPFAM" id="SSF50939">
    <property type="entry name" value="Sialidases"/>
    <property type="match status" value="1"/>
</dbReference>
<feature type="chain" id="PRO_0000280145" description="Neuraminidase">
    <location>
        <begin position="1"/>
        <end position="469"/>
    </location>
</feature>
<feature type="topological domain" description="Intravirion" evidence="1">
    <location>
        <begin position="1"/>
        <end position="9"/>
    </location>
</feature>
<feature type="transmembrane region" description="Helical" evidence="1">
    <location>
        <begin position="10"/>
        <end position="30"/>
    </location>
</feature>
<feature type="topological domain" description="Virion surface" evidence="1">
    <location>
        <begin position="31"/>
        <end position="469"/>
    </location>
</feature>
<feature type="region of interest" description="Involved in apical transport and lipid raft association" evidence="1">
    <location>
        <begin position="11"/>
        <end position="33"/>
    </location>
</feature>
<feature type="region of interest" description="Hypervariable stalk region" evidence="1">
    <location>
        <begin position="36"/>
        <end position="88"/>
    </location>
</feature>
<feature type="region of interest" description="Head of neuraminidase" evidence="1">
    <location>
        <begin position="91"/>
        <end position="469"/>
    </location>
</feature>
<feature type="active site" description="Proton donor/acceptor" evidence="1">
    <location>
        <position position="151"/>
    </location>
</feature>
<feature type="active site" description="Nucleophile" evidence="1">
    <location>
        <position position="406"/>
    </location>
</feature>
<feature type="binding site" evidence="1">
    <location>
        <position position="118"/>
    </location>
    <ligand>
        <name>substrate</name>
    </ligand>
</feature>
<feature type="binding site" evidence="1">
    <location>
        <position position="152"/>
    </location>
    <ligand>
        <name>substrate</name>
    </ligand>
</feature>
<feature type="binding site" evidence="1">
    <location>
        <begin position="276"/>
        <end position="277"/>
    </location>
    <ligand>
        <name>substrate</name>
    </ligand>
</feature>
<feature type="binding site" evidence="1">
    <location>
        <position position="292"/>
    </location>
    <ligand>
        <name>substrate</name>
    </ligand>
</feature>
<feature type="binding site" evidence="1">
    <location>
        <position position="293"/>
    </location>
    <ligand>
        <name>Ca(2+)</name>
        <dbReference type="ChEBI" id="CHEBI:29108"/>
    </ligand>
</feature>
<feature type="binding site" evidence="1">
    <location>
        <position position="297"/>
    </location>
    <ligand>
        <name>Ca(2+)</name>
        <dbReference type="ChEBI" id="CHEBI:29108"/>
    </ligand>
</feature>
<feature type="binding site" evidence="1">
    <location>
        <position position="324"/>
    </location>
    <ligand>
        <name>Ca(2+)</name>
        <dbReference type="ChEBI" id="CHEBI:29108"/>
    </ligand>
</feature>
<feature type="binding site" evidence="1">
    <location>
        <position position="371"/>
    </location>
    <ligand>
        <name>substrate</name>
    </ligand>
</feature>
<feature type="glycosylation site" description="N-linked (GlcNAc...) asparagine; by host" evidence="1">
    <location>
        <position position="61"/>
    </location>
</feature>
<feature type="glycosylation site" description="N-linked (GlcNAc...) asparagine; by host" evidence="1">
    <location>
        <position position="70"/>
    </location>
</feature>
<feature type="glycosylation site" description="N-linked (GlcNAc...) asparagine; by host" evidence="1">
    <location>
        <position position="86"/>
    </location>
</feature>
<feature type="glycosylation site" description="N-linked (GlcNAc...) asparagine; by host" evidence="1">
    <location>
        <position position="146"/>
    </location>
</feature>
<feature type="glycosylation site" description="N-linked (GlcNAc...) asparagine; by host" evidence="1">
    <location>
        <position position="200"/>
    </location>
</feature>
<feature type="glycosylation site" description="N-linked (GlcNAc...) asparagine; by host" evidence="1">
    <location>
        <position position="234"/>
    </location>
</feature>
<feature type="glycosylation site" description="N-linked (GlcNAc...) asparagine; by host" evidence="1">
    <location>
        <position position="402"/>
    </location>
</feature>
<feature type="disulfide bond" evidence="1">
    <location>
        <begin position="92"/>
        <end position="417"/>
    </location>
</feature>
<feature type="disulfide bond" evidence="1">
    <location>
        <begin position="124"/>
        <end position="129"/>
    </location>
</feature>
<feature type="disulfide bond" evidence="1">
    <location>
        <begin position="183"/>
        <end position="230"/>
    </location>
</feature>
<feature type="disulfide bond" evidence="1">
    <location>
        <begin position="232"/>
        <end position="237"/>
    </location>
</feature>
<feature type="disulfide bond" evidence="1">
    <location>
        <begin position="278"/>
        <end position="291"/>
    </location>
</feature>
<feature type="disulfide bond" evidence="1">
    <location>
        <begin position="280"/>
        <end position="289"/>
    </location>
</feature>
<feature type="disulfide bond" evidence="1">
    <location>
        <begin position="318"/>
        <end position="337"/>
    </location>
</feature>
<feature type="disulfide bond" evidence="1">
    <location>
        <begin position="421"/>
        <end position="447"/>
    </location>
</feature>
<protein>
    <recommendedName>
        <fullName evidence="1">Neuraminidase</fullName>
        <ecNumber evidence="1">3.2.1.18</ecNumber>
    </recommendedName>
</protein>
<organismHost>
    <name type="scientific">Aves</name>
    <dbReference type="NCBI Taxonomy" id="8782"/>
</organismHost>
<organismHost>
    <name type="scientific">Cetacea</name>
    <name type="common">whales</name>
    <dbReference type="NCBI Taxonomy" id="9721"/>
</organismHost>
<organismHost>
    <name type="scientific">Homo sapiens</name>
    <name type="common">Human</name>
    <dbReference type="NCBI Taxonomy" id="9606"/>
</organismHost>
<organismHost>
    <name type="scientific">Phocidae</name>
    <name type="common">true seals</name>
    <dbReference type="NCBI Taxonomy" id="9709"/>
</organismHost>
<organismHost>
    <name type="scientific">Sus scrofa</name>
    <name type="common">Pig</name>
    <dbReference type="NCBI Taxonomy" id="9823"/>
</organismHost>
<reference key="1">
    <citation type="submission" date="2005-12" db="EMBL/GenBank/DDBJ databases">
        <title>The NIAID influenza genome sequencing project.</title>
        <authorList>
            <person name="Ghedin E."/>
            <person name="Spiro D."/>
            <person name="Miller N."/>
            <person name="Zaborsky J."/>
            <person name="Feldblyum T."/>
            <person name="Subbu V."/>
            <person name="Shumway M."/>
            <person name="Sparenborg J."/>
            <person name="Groveman L."/>
            <person name="Halpin R."/>
            <person name="Sitz J."/>
            <person name="Koo H."/>
            <person name="Salzberg S.L."/>
            <person name="Webster R.G."/>
            <person name="Hoffmann E."/>
            <person name="Krauss S."/>
            <person name="Naeve C."/>
            <person name="Bao Y."/>
            <person name="Bolotov P."/>
            <person name="Dernovoy D."/>
            <person name="Kiryutin B."/>
            <person name="Lipman D.J."/>
            <person name="Tatusova T."/>
        </authorList>
    </citation>
    <scope>NUCLEOTIDE SEQUENCE [GENOMIC RNA]</scope>
</reference>
<reference key="2">
    <citation type="journal article" date="2004" name="Virus Res.">
        <title>Assembly and budding of influenza virus.</title>
        <authorList>
            <person name="Nayak D.P."/>
            <person name="Hui E.K."/>
            <person name="Barman S."/>
        </authorList>
    </citation>
    <scope>REVIEW</scope>
</reference>
<reference key="3">
    <citation type="journal article" date="2005" name="N. Engl. J. Med.">
        <title>Neuraminidase inhibitors for influenza.</title>
        <authorList>
            <person name="Moscona A."/>
        </authorList>
    </citation>
    <scope>REVIEW</scope>
</reference>
<reference key="4">
    <citation type="journal article" date="2005" name="Biol. Pharm. Bull.">
        <title>Sialobiology of influenza: molecular mechanism of host range variation of influenza viruses.</title>
        <authorList>
            <person name="Suzuki Y."/>
        </authorList>
    </citation>
    <scope>REVIEW</scope>
</reference>
<proteinExistence type="inferred from homology"/>
<organism>
    <name type="scientific">Influenza A virus (strain A/Memphis/110/1976 H3N2)</name>
    <dbReference type="NCBI Taxonomy" id="383581"/>
    <lineage>
        <taxon>Viruses</taxon>
        <taxon>Riboviria</taxon>
        <taxon>Orthornavirae</taxon>
        <taxon>Negarnaviricota</taxon>
        <taxon>Polyploviricotina</taxon>
        <taxon>Insthoviricetes</taxon>
        <taxon>Articulavirales</taxon>
        <taxon>Orthomyxoviridae</taxon>
        <taxon>Alphainfluenzavirus</taxon>
        <taxon>Alphainfluenzavirus influenzae</taxon>
        <taxon>Influenza A virus</taxon>
    </lineage>
</organism>
<keyword id="KW-0106">Calcium</keyword>
<keyword id="KW-1015">Disulfide bond</keyword>
<keyword id="KW-0325">Glycoprotein</keyword>
<keyword id="KW-0326">Glycosidase</keyword>
<keyword id="KW-1032">Host cell membrane</keyword>
<keyword id="KW-1043">Host membrane</keyword>
<keyword id="KW-0378">Hydrolase</keyword>
<keyword id="KW-0472">Membrane</keyword>
<keyword id="KW-0479">Metal-binding</keyword>
<keyword id="KW-0735">Signal-anchor</keyword>
<keyword id="KW-0812">Transmembrane</keyword>
<keyword id="KW-1133">Transmembrane helix</keyword>
<keyword id="KW-0946">Virion</keyword>
<gene>
    <name evidence="1" type="primary">NA</name>
</gene>
<sequence length="469" mass="52094">MNPNQKIITIGSVSLTIATICFLMQIAILVTTVTLHFKQYECDSPANNQVMPCEPIIIERNITEIVYLTNTTIEKEICPKLVEYRNWSKPQCKITGFAPFSKDNSIRLSAGGDIWVTREPYVSCDPGKCYQFALGQGTTLDNKHSNDTIHDRTPHRTLLMNELGVPFHLGTRQVCIAWSSSSCHDGKAWLHVCVTGYDKNATASFIYDGRLVDSIGSWSQNILRTQESECVCINGTCTVVMTDGSASGRADTKILFIEEGKIVHTSPLSGSAQHVEECSCYPRYPGVRCICRDNWKGSNRPVVDINVKDYSIDSSYVCSGLVGDTPRNNDRSSSSYCRNPNNEKGTHGVKGWAFDDGNDVWMGRTISEDSRSGYETFKVIGGWSTPNSKLQINRQVIVDSDNRSGYSGIFSVEGKSCINRCFYVELIRGREQETRVWWTSNSIVVFCGTSGTYGTGSWPDGADINLMPI</sequence>
<comment type="function">
    <text evidence="1">Catalyzes the removal of terminal sialic acid residues from viral and cellular glycoconjugates. Cleaves off the terminal sialic acids on the glycosylated HA during virus budding to facilitate virus release. Additionally helps virus spread through the circulation by further removing sialic acids from the cell surface. These cleavages prevent self-aggregation and ensure the efficient spread of the progeny virus from cell to cell. Otherwise, infection would be limited to one round of replication. Described as a receptor-destroying enzyme because it cleaves a terminal sialic acid from the cellular receptors. May facilitate viral invasion of the upper airways by cleaving the sialic acid moieties on the mucin of the airway epithelial cells. Likely to plays a role in the budding process through its association with lipid rafts during intracellular transport. May additionally display a raft-association independent effect on budding. Plays a role in the determination of host range restriction on replication and virulence. Sialidase activity in late endosome/lysosome traffic seems to enhance virus replication.</text>
</comment>
<comment type="catalytic activity">
    <reaction evidence="1">
        <text>Hydrolysis of alpha-(2-&gt;3)-, alpha-(2-&gt;6)-, alpha-(2-&gt;8)- glycosidic linkages of terminal sialic acid residues in oligosaccharides, glycoproteins, glycolipids, colominic acid and synthetic substrates.</text>
        <dbReference type="EC" id="3.2.1.18"/>
    </reaction>
</comment>
<comment type="cofactor">
    <cofactor evidence="1">
        <name>Ca(2+)</name>
        <dbReference type="ChEBI" id="CHEBI:29108"/>
    </cofactor>
</comment>
<comment type="activity regulation">
    <text evidence="1">Inhibited by the neuraminidase inhibitors zanamivir (Relenza) and oseltamivir (Tamiflu). These drugs interfere with the release of progeny virus from infected cells and are effective against all influenza strains. Resistance to neuraminidase inhibitors is quite rare.</text>
</comment>
<comment type="subunit">
    <text evidence="1">Homotetramer.</text>
</comment>
<comment type="subcellular location">
    <subcellularLocation>
        <location evidence="1">Virion membrane</location>
    </subcellularLocation>
    <subcellularLocation>
        <location evidence="1">Host apical cell membrane</location>
        <topology evidence="1">Single-pass type II membrane protein</topology>
    </subcellularLocation>
    <text evidence="1">Preferentially accumulates at the apical plasma membrane in infected polarized epithelial cells, which is the virus assembly site. Uses lipid rafts for cell surface transport and apical sorting. In the virion, forms a mushroom-shaped spike on the surface of the membrane.</text>
</comment>
<comment type="domain">
    <text evidence="1">Intact N-terminus is essential for virion morphogenesis. Possesses two apical sorting signals, one in the ectodomain, which is likely to be a glycan, and the other in the transmembrane domain. The transmembrane domain also plays a role in lipid raft association.</text>
</comment>
<comment type="PTM">
    <text evidence="1">N-glycosylated.</text>
</comment>
<comment type="miscellaneous">
    <text>The influenza A genome consist of 8 RNA segments. Genetic variation of hemagglutinin and/or neuraminidase genes results in the emergence of new influenza strains. The mechanism of variation can be the result of point mutations or the result of genetic reassortment between segments of two different strains.</text>
</comment>
<comment type="similarity">
    <text evidence="1">Belongs to the glycosyl hydrolase 34 family.</text>
</comment>
<evidence type="ECO:0000255" key="1">
    <source>
        <dbReference type="HAMAP-Rule" id="MF_04071"/>
    </source>
</evidence>
<accession>Q2RFA3</accession>
<name>NRAM_I76A6</name>